<name>RS9_ACTP2</name>
<accession>A3MZW7</accession>
<feature type="chain" id="PRO_1000051149" description="Small ribosomal subunit protein uS9">
    <location>
        <begin position="1"/>
        <end position="131"/>
    </location>
</feature>
<comment type="similarity">
    <text evidence="1">Belongs to the universal ribosomal protein uS9 family.</text>
</comment>
<keyword id="KW-1185">Reference proteome</keyword>
<keyword id="KW-0687">Ribonucleoprotein</keyword>
<keyword id="KW-0689">Ribosomal protein</keyword>
<gene>
    <name evidence="1" type="primary">rpsI</name>
    <name type="ordered locus">APL_0601</name>
</gene>
<proteinExistence type="inferred from homology"/>
<evidence type="ECO:0000255" key="1">
    <source>
        <dbReference type="HAMAP-Rule" id="MF_00532"/>
    </source>
</evidence>
<evidence type="ECO:0000305" key="2"/>
<reference key="1">
    <citation type="journal article" date="2008" name="J. Bacteriol.">
        <title>The complete genome sequence of Actinobacillus pleuropneumoniae L20 (serotype 5b).</title>
        <authorList>
            <person name="Foote S.J."/>
            <person name="Bosse J.T."/>
            <person name="Bouevitch A.B."/>
            <person name="Langford P.R."/>
            <person name="Young N.M."/>
            <person name="Nash J.H.E."/>
        </authorList>
    </citation>
    <scope>NUCLEOTIDE SEQUENCE [LARGE SCALE GENOMIC DNA]</scope>
    <source>
        <strain>L20</strain>
    </source>
</reference>
<organism>
    <name type="scientific">Actinobacillus pleuropneumoniae serotype 5b (strain L20)</name>
    <dbReference type="NCBI Taxonomy" id="416269"/>
    <lineage>
        <taxon>Bacteria</taxon>
        <taxon>Pseudomonadati</taxon>
        <taxon>Pseudomonadota</taxon>
        <taxon>Gammaproteobacteria</taxon>
        <taxon>Pasteurellales</taxon>
        <taxon>Pasteurellaceae</taxon>
        <taxon>Actinobacillus</taxon>
    </lineage>
</organism>
<sequence length="131" mass="14758">MTAANQNYGTGRRKSSSARVFIKPGNGNITIDQRSLDVYFGRETSRMVVRQPLELVELLDKLDLYITVKGGGISGQAGAIRHGITRALMEYDETLRPALRAAGFVTRDARRVERKKVGLHKARRRPQYSKR</sequence>
<protein>
    <recommendedName>
        <fullName evidence="1">Small ribosomal subunit protein uS9</fullName>
    </recommendedName>
    <alternativeName>
        <fullName evidence="2">30S ribosomal protein S9</fullName>
    </alternativeName>
</protein>
<dbReference type="EMBL" id="CP000569">
    <property type="protein sequence ID" value="ABN73703.1"/>
    <property type="molecule type" value="Genomic_DNA"/>
</dbReference>
<dbReference type="RefSeq" id="WP_011848437.1">
    <property type="nucleotide sequence ID" value="NC_009053.1"/>
</dbReference>
<dbReference type="SMR" id="A3MZW7"/>
<dbReference type="STRING" id="416269.APL_0601"/>
<dbReference type="EnsemblBacteria" id="ABN73703">
    <property type="protein sequence ID" value="ABN73703"/>
    <property type="gene ID" value="APL_0601"/>
</dbReference>
<dbReference type="KEGG" id="apl:APL_0601"/>
<dbReference type="PATRIC" id="fig|416269.6.peg.632"/>
<dbReference type="eggNOG" id="COG0103">
    <property type="taxonomic scope" value="Bacteria"/>
</dbReference>
<dbReference type="HOGENOM" id="CLU_046483_2_1_6"/>
<dbReference type="Proteomes" id="UP000001432">
    <property type="component" value="Chromosome"/>
</dbReference>
<dbReference type="GO" id="GO:0022627">
    <property type="term" value="C:cytosolic small ribosomal subunit"/>
    <property type="evidence" value="ECO:0007669"/>
    <property type="project" value="TreeGrafter"/>
</dbReference>
<dbReference type="GO" id="GO:0003723">
    <property type="term" value="F:RNA binding"/>
    <property type="evidence" value="ECO:0007669"/>
    <property type="project" value="TreeGrafter"/>
</dbReference>
<dbReference type="GO" id="GO:0003735">
    <property type="term" value="F:structural constituent of ribosome"/>
    <property type="evidence" value="ECO:0007669"/>
    <property type="project" value="InterPro"/>
</dbReference>
<dbReference type="GO" id="GO:0006412">
    <property type="term" value="P:translation"/>
    <property type="evidence" value="ECO:0007669"/>
    <property type="project" value="UniProtKB-UniRule"/>
</dbReference>
<dbReference type="FunFam" id="3.30.230.10:FF:000001">
    <property type="entry name" value="30S ribosomal protein S9"/>
    <property type="match status" value="1"/>
</dbReference>
<dbReference type="Gene3D" id="3.30.230.10">
    <property type="match status" value="1"/>
</dbReference>
<dbReference type="HAMAP" id="MF_00532_B">
    <property type="entry name" value="Ribosomal_uS9_B"/>
    <property type="match status" value="1"/>
</dbReference>
<dbReference type="InterPro" id="IPR020568">
    <property type="entry name" value="Ribosomal_Su5_D2-typ_SF"/>
</dbReference>
<dbReference type="InterPro" id="IPR000754">
    <property type="entry name" value="Ribosomal_uS9"/>
</dbReference>
<dbReference type="InterPro" id="IPR023035">
    <property type="entry name" value="Ribosomal_uS9_bac/plastid"/>
</dbReference>
<dbReference type="InterPro" id="IPR020574">
    <property type="entry name" value="Ribosomal_uS9_CS"/>
</dbReference>
<dbReference type="InterPro" id="IPR014721">
    <property type="entry name" value="Ribsml_uS5_D2-typ_fold_subgr"/>
</dbReference>
<dbReference type="NCBIfam" id="NF001099">
    <property type="entry name" value="PRK00132.1"/>
    <property type="match status" value="1"/>
</dbReference>
<dbReference type="PANTHER" id="PTHR21569">
    <property type="entry name" value="RIBOSOMAL PROTEIN S9"/>
    <property type="match status" value="1"/>
</dbReference>
<dbReference type="PANTHER" id="PTHR21569:SF1">
    <property type="entry name" value="SMALL RIBOSOMAL SUBUNIT PROTEIN US9M"/>
    <property type="match status" value="1"/>
</dbReference>
<dbReference type="Pfam" id="PF00380">
    <property type="entry name" value="Ribosomal_S9"/>
    <property type="match status" value="1"/>
</dbReference>
<dbReference type="SUPFAM" id="SSF54211">
    <property type="entry name" value="Ribosomal protein S5 domain 2-like"/>
    <property type="match status" value="1"/>
</dbReference>
<dbReference type="PROSITE" id="PS00360">
    <property type="entry name" value="RIBOSOMAL_S9"/>
    <property type="match status" value="1"/>
</dbReference>